<evidence type="ECO:0000255" key="1">
    <source>
        <dbReference type="HAMAP-Rule" id="MF_00430"/>
    </source>
</evidence>
<reference key="1">
    <citation type="journal article" date="2007" name="PLoS Genet.">
        <title>Meningococcal genetic variation mechanisms viewed through comparative analysis of serogroup C strain FAM18.</title>
        <authorList>
            <person name="Bentley S.D."/>
            <person name="Vernikos G.S."/>
            <person name="Snyder L.A.S."/>
            <person name="Churcher C."/>
            <person name="Arrowsmith C."/>
            <person name="Chillingworth T."/>
            <person name="Cronin A."/>
            <person name="Davis P.H."/>
            <person name="Holroyd N.E."/>
            <person name="Jagels K."/>
            <person name="Maddison M."/>
            <person name="Moule S."/>
            <person name="Rabbinowitsch E."/>
            <person name="Sharp S."/>
            <person name="Unwin L."/>
            <person name="Whitehead S."/>
            <person name="Quail M.A."/>
            <person name="Achtman M."/>
            <person name="Barrell B.G."/>
            <person name="Saunders N.J."/>
            <person name="Parkhill J."/>
        </authorList>
    </citation>
    <scope>NUCLEOTIDE SEQUENCE [LARGE SCALE GENOMIC DNA]</scope>
    <source>
        <strain>ATCC 700532 / DSM 15464 / FAM18</strain>
    </source>
</reference>
<gene>
    <name evidence="1" type="primary">nqrF</name>
    <name type="ordered locus">NMC0505</name>
</gene>
<accession>A1KSH3</accession>
<name>NQRF_NEIMF</name>
<keyword id="KW-0001">2Fe-2S</keyword>
<keyword id="KW-0997">Cell inner membrane</keyword>
<keyword id="KW-1003">Cell membrane</keyword>
<keyword id="KW-0274">FAD</keyword>
<keyword id="KW-0285">Flavoprotein</keyword>
<keyword id="KW-0406">Ion transport</keyword>
<keyword id="KW-0408">Iron</keyword>
<keyword id="KW-0411">Iron-sulfur</keyword>
<keyword id="KW-0472">Membrane</keyword>
<keyword id="KW-0479">Metal-binding</keyword>
<keyword id="KW-0520">NAD</keyword>
<keyword id="KW-0915">Sodium</keyword>
<keyword id="KW-0739">Sodium transport</keyword>
<keyword id="KW-1278">Translocase</keyword>
<keyword id="KW-0812">Transmembrane</keyword>
<keyword id="KW-1133">Transmembrane helix</keyword>
<keyword id="KW-0813">Transport</keyword>
<keyword id="KW-0830">Ubiquinone</keyword>
<sequence length="405" mass="45165">MEIILGIVMFTVIVLVLALMILFAKSKLVSEGDITIKVNGEKELTMPAGGKLLGALANEGIFIPSACGGGGSCGQCRVVVKSGGGDILPTELSHISKREAREGCRLSCQVNVKTDMDIEVPEEVFGVKKWECTVISNDNKATFIKELKLAIPEGEEVPFRAGGYIQIEAPPHTVAYKDFDIPEEYHEDWDKYNLWQYVSKVDEPILRAYSMASYPEEKGIIMLNVRIATPPPRVPDAPPGQMSSYIWSLKPGDKVTISGPFGEFFAKDTDAEMVFIGGGAGMAPMRSHIFDQLKRLNSKRKITFWYGARSKREMFYVEDFDQLAAEFPNFTWHVALSDPLPEDNWDGYTGFIHNVVYENHLKNHEAPEDCEFYMCGPPIMNQSVIKMLKDLGVEDENILLDDFGG</sequence>
<dbReference type="EC" id="7.2.1.1" evidence="1"/>
<dbReference type="EMBL" id="AM421808">
    <property type="protein sequence ID" value="CAM09803.1"/>
    <property type="molecule type" value="Genomic_DNA"/>
</dbReference>
<dbReference type="RefSeq" id="WP_002214365.1">
    <property type="nucleotide sequence ID" value="NC_008767.1"/>
</dbReference>
<dbReference type="SMR" id="A1KSH3"/>
<dbReference type="GeneID" id="93386621"/>
<dbReference type="KEGG" id="nmc:NMC0505"/>
<dbReference type="HOGENOM" id="CLU_003827_7_2_4"/>
<dbReference type="Proteomes" id="UP000002286">
    <property type="component" value="Chromosome"/>
</dbReference>
<dbReference type="GO" id="GO:0005886">
    <property type="term" value="C:plasma membrane"/>
    <property type="evidence" value="ECO:0007669"/>
    <property type="project" value="UniProtKB-SubCell"/>
</dbReference>
<dbReference type="GO" id="GO:0051537">
    <property type="term" value="F:2 iron, 2 sulfur cluster binding"/>
    <property type="evidence" value="ECO:0007669"/>
    <property type="project" value="UniProtKB-KW"/>
</dbReference>
<dbReference type="GO" id="GO:0009055">
    <property type="term" value="F:electron transfer activity"/>
    <property type="evidence" value="ECO:0007669"/>
    <property type="project" value="UniProtKB-UniRule"/>
</dbReference>
<dbReference type="GO" id="GO:0046872">
    <property type="term" value="F:metal ion binding"/>
    <property type="evidence" value="ECO:0007669"/>
    <property type="project" value="UniProtKB-KW"/>
</dbReference>
<dbReference type="GO" id="GO:0016655">
    <property type="term" value="F:oxidoreductase activity, acting on NAD(P)H, quinone or similar compound as acceptor"/>
    <property type="evidence" value="ECO:0007669"/>
    <property type="project" value="InterPro"/>
</dbReference>
<dbReference type="GO" id="GO:0006814">
    <property type="term" value="P:sodium ion transport"/>
    <property type="evidence" value="ECO:0007669"/>
    <property type="project" value="UniProtKB-UniRule"/>
</dbReference>
<dbReference type="CDD" id="cd06188">
    <property type="entry name" value="NADH_quinone_reductase"/>
    <property type="match status" value="1"/>
</dbReference>
<dbReference type="FunFam" id="2.40.30.10:FF:000064">
    <property type="entry name" value="Na(+)-translocating NADH-quinone reductase subunit F"/>
    <property type="match status" value="1"/>
</dbReference>
<dbReference type="FunFam" id="3.40.50.80:FF:000014">
    <property type="entry name" value="Na(+)-translocating NADH-quinone reductase subunit F"/>
    <property type="match status" value="1"/>
</dbReference>
<dbReference type="Gene3D" id="3.10.20.30">
    <property type="match status" value="1"/>
</dbReference>
<dbReference type="Gene3D" id="3.40.50.80">
    <property type="entry name" value="Nucleotide-binding domain of ferredoxin-NADP reductase (FNR) module"/>
    <property type="match status" value="1"/>
</dbReference>
<dbReference type="Gene3D" id="2.40.30.10">
    <property type="entry name" value="Translation factors"/>
    <property type="match status" value="1"/>
</dbReference>
<dbReference type="HAMAP" id="MF_00430">
    <property type="entry name" value="NqrF"/>
    <property type="match status" value="1"/>
</dbReference>
<dbReference type="InterPro" id="IPR036010">
    <property type="entry name" value="2Fe-2S_ferredoxin-like_sf"/>
</dbReference>
<dbReference type="InterPro" id="IPR001041">
    <property type="entry name" value="2Fe-2S_ferredoxin-type"/>
</dbReference>
<dbReference type="InterPro" id="IPR012675">
    <property type="entry name" value="Beta-grasp_dom_sf"/>
</dbReference>
<dbReference type="InterPro" id="IPR008333">
    <property type="entry name" value="Cbr1-like_FAD-bd_dom"/>
</dbReference>
<dbReference type="InterPro" id="IPR017927">
    <property type="entry name" value="FAD-bd_FR_type"/>
</dbReference>
<dbReference type="InterPro" id="IPR039261">
    <property type="entry name" value="FNR_nucleotide-bd"/>
</dbReference>
<dbReference type="InterPro" id="IPR010205">
    <property type="entry name" value="NqrF"/>
</dbReference>
<dbReference type="InterPro" id="IPR001433">
    <property type="entry name" value="OxRdtase_FAD/NAD-bd"/>
</dbReference>
<dbReference type="InterPro" id="IPR017938">
    <property type="entry name" value="Riboflavin_synthase-like_b-brl"/>
</dbReference>
<dbReference type="NCBIfam" id="TIGR01941">
    <property type="entry name" value="nqrF"/>
    <property type="match status" value="1"/>
</dbReference>
<dbReference type="PANTHER" id="PTHR43644">
    <property type="entry name" value="NA(+)-TRANSLOCATING NADH-QUINONE REDUCTASE SUBUNIT"/>
    <property type="match status" value="1"/>
</dbReference>
<dbReference type="PANTHER" id="PTHR43644:SF1">
    <property type="entry name" value="NAD(P)H-FLAVIN REDUCTASE"/>
    <property type="match status" value="1"/>
</dbReference>
<dbReference type="Pfam" id="PF00970">
    <property type="entry name" value="FAD_binding_6"/>
    <property type="match status" value="1"/>
</dbReference>
<dbReference type="Pfam" id="PF00111">
    <property type="entry name" value="Fer2"/>
    <property type="match status" value="1"/>
</dbReference>
<dbReference type="Pfam" id="PF00175">
    <property type="entry name" value="NAD_binding_1"/>
    <property type="match status" value="1"/>
</dbReference>
<dbReference type="PIRSF" id="PIRSF000044">
    <property type="entry name" value="Cis_Diol_DH_RD"/>
    <property type="match status" value="1"/>
</dbReference>
<dbReference type="SUPFAM" id="SSF54292">
    <property type="entry name" value="2Fe-2S ferredoxin-like"/>
    <property type="match status" value="1"/>
</dbReference>
<dbReference type="SUPFAM" id="SSF52343">
    <property type="entry name" value="Ferredoxin reductase-like, C-terminal NADP-linked domain"/>
    <property type="match status" value="1"/>
</dbReference>
<dbReference type="SUPFAM" id="SSF63380">
    <property type="entry name" value="Riboflavin synthase domain-like"/>
    <property type="match status" value="1"/>
</dbReference>
<dbReference type="PROSITE" id="PS51085">
    <property type="entry name" value="2FE2S_FER_2"/>
    <property type="match status" value="1"/>
</dbReference>
<dbReference type="PROSITE" id="PS51384">
    <property type="entry name" value="FAD_FR"/>
    <property type="match status" value="1"/>
</dbReference>
<proteinExistence type="inferred from homology"/>
<comment type="function">
    <text evidence="1">NQR complex catalyzes the reduction of ubiquinone-1 to ubiquinol by two successive reactions, coupled with the transport of Na(+) ions from the cytoplasm to the periplasm. The first step is catalyzed by NqrF, which accepts electrons from NADH and reduces ubiquinone-1 to ubisemiquinone by a one-electron transfer pathway.</text>
</comment>
<comment type="catalytic activity">
    <reaction evidence="1">
        <text>a ubiquinone + n Na(+)(in) + NADH + H(+) = a ubiquinol + n Na(+)(out) + NAD(+)</text>
        <dbReference type="Rhea" id="RHEA:47748"/>
        <dbReference type="Rhea" id="RHEA-COMP:9565"/>
        <dbReference type="Rhea" id="RHEA-COMP:9566"/>
        <dbReference type="ChEBI" id="CHEBI:15378"/>
        <dbReference type="ChEBI" id="CHEBI:16389"/>
        <dbReference type="ChEBI" id="CHEBI:17976"/>
        <dbReference type="ChEBI" id="CHEBI:29101"/>
        <dbReference type="ChEBI" id="CHEBI:57540"/>
        <dbReference type="ChEBI" id="CHEBI:57945"/>
        <dbReference type="EC" id="7.2.1.1"/>
    </reaction>
</comment>
<comment type="cofactor">
    <cofactor evidence="1">
        <name>[2Fe-2S] cluster</name>
        <dbReference type="ChEBI" id="CHEBI:190135"/>
    </cofactor>
    <text evidence="1">Binds 1 [2Fe-2S] cluster.</text>
</comment>
<comment type="cofactor">
    <cofactor evidence="1">
        <name>FAD</name>
        <dbReference type="ChEBI" id="CHEBI:57692"/>
    </cofactor>
</comment>
<comment type="subunit">
    <text evidence="1">Composed of six subunits; NqrA, NqrB, NqrC, NqrD, NqrE and NqrF.</text>
</comment>
<comment type="subcellular location">
    <subcellularLocation>
        <location evidence="1">Cell inner membrane</location>
        <topology evidence="1">Single-pass membrane protein</topology>
    </subcellularLocation>
</comment>
<comment type="similarity">
    <text evidence="1">Belongs to the NqrF family.</text>
</comment>
<feature type="chain" id="PRO_1000080587" description="Na(+)-translocating NADH-quinone reductase subunit F">
    <location>
        <begin position="1"/>
        <end position="405"/>
    </location>
</feature>
<feature type="transmembrane region" description="Helical" evidence="1">
    <location>
        <begin position="3"/>
        <end position="23"/>
    </location>
</feature>
<feature type="domain" description="2Fe-2S ferredoxin-type" evidence="1">
    <location>
        <begin position="32"/>
        <end position="124"/>
    </location>
</feature>
<feature type="domain" description="FAD-binding FR-type" evidence="1">
    <location>
        <begin position="127"/>
        <end position="267"/>
    </location>
</feature>
<feature type="binding site" evidence="1">
    <location>
        <position position="67"/>
    </location>
    <ligand>
        <name>[2Fe-2S] cluster</name>
        <dbReference type="ChEBI" id="CHEBI:190135"/>
    </ligand>
</feature>
<feature type="binding site" evidence="1">
    <location>
        <position position="73"/>
    </location>
    <ligand>
        <name>[2Fe-2S] cluster</name>
        <dbReference type="ChEBI" id="CHEBI:190135"/>
    </ligand>
</feature>
<feature type="binding site" evidence="1">
    <location>
        <position position="76"/>
    </location>
    <ligand>
        <name>[2Fe-2S] cluster</name>
        <dbReference type="ChEBI" id="CHEBI:190135"/>
    </ligand>
</feature>
<feature type="binding site" evidence="1">
    <location>
        <position position="108"/>
    </location>
    <ligand>
        <name>[2Fe-2S] cluster</name>
        <dbReference type="ChEBI" id="CHEBI:190135"/>
    </ligand>
</feature>
<organism>
    <name type="scientific">Neisseria meningitidis serogroup C / serotype 2a (strain ATCC 700532 / DSM 15464 / FAM18)</name>
    <dbReference type="NCBI Taxonomy" id="272831"/>
    <lineage>
        <taxon>Bacteria</taxon>
        <taxon>Pseudomonadati</taxon>
        <taxon>Pseudomonadota</taxon>
        <taxon>Betaproteobacteria</taxon>
        <taxon>Neisseriales</taxon>
        <taxon>Neisseriaceae</taxon>
        <taxon>Neisseria</taxon>
    </lineage>
</organism>
<protein>
    <recommendedName>
        <fullName evidence="1">Na(+)-translocating NADH-quinone reductase subunit F</fullName>
        <shortName evidence="1">Na(+)-NQR subunit F</shortName>
        <shortName evidence="1">Na(+)-translocating NQR subunit F</shortName>
        <ecNumber evidence="1">7.2.1.1</ecNumber>
    </recommendedName>
    <alternativeName>
        <fullName evidence="1">NQR complex subunit F</fullName>
    </alternativeName>
    <alternativeName>
        <fullName evidence="1">NQR-1 subunit F</fullName>
    </alternativeName>
</protein>